<accession>K7VYZ9</accession>
<accession>B4FEC1</accession>
<proteinExistence type="evidence at transcript level"/>
<protein>
    <recommendedName>
        <fullName evidence="5">Mitochondrial carrier protein CoAc1</fullName>
    </recommendedName>
    <alternativeName>
        <fullName evidence="5">Mitochondrial carrier family protein 2</fullName>
    </alternativeName>
    <alternativeName>
        <fullName evidence="5">Mitochondrial coenzyme A transporter CoAc1</fullName>
    </alternativeName>
    <alternativeName>
        <fullName evidence="4">ZmCoAc1</fullName>
    </alternativeName>
</protein>
<reference key="1">
    <citation type="journal article" date="2009" name="Science">
        <title>The B73 maize genome: complexity, diversity, and dynamics.</title>
        <authorList>
            <person name="Schnable P.S."/>
            <person name="Ware D."/>
            <person name="Fulton R.S."/>
            <person name="Stein J.C."/>
            <person name="Wei F."/>
            <person name="Pasternak S."/>
            <person name="Liang C."/>
            <person name="Zhang J."/>
            <person name="Fulton L."/>
            <person name="Graves T.A."/>
            <person name="Minx P."/>
            <person name="Reily A.D."/>
            <person name="Courtney L."/>
            <person name="Kruchowski S.S."/>
            <person name="Tomlinson C."/>
            <person name="Strong C."/>
            <person name="Delehaunty K."/>
            <person name="Fronick C."/>
            <person name="Courtney B."/>
            <person name="Rock S.M."/>
            <person name="Belter E."/>
            <person name="Du F."/>
            <person name="Kim K."/>
            <person name="Abbott R.M."/>
            <person name="Cotton M."/>
            <person name="Levy A."/>
            <person name="Marchetto P."/>
            <person name="Ochoa K."/>
            <person name="Jackson S.M."/>
            <person name="Gillam B."/>
            <person name="Chen W."/>
            <person name="Yan L."/>
            <person name="Higginbotham J."/>
            <person name="Cardenas M."/>
            <person name="Waligorski J."/>
            <person name="Applebaum E."/>
            <person name="Phelps L."/>
            <person name="Falcone J."/>
            <person name="Kanchi K."/>
            <person name="Thane T."/>
            <person name="Scimone A."/>
            <person name="Thane N."/>
            <person name="Henke J."/>
            <person name="Wang T."/>
            <person name="Ruppert J."/>
            <person name="Shah N."/>
            <person name="Rotter K."/>
            <person name="Hodges J."/>
            <person name="Ingenthron E."/>
            <person name="Cordes M."/>
            <person name="Kohlberg S."/>
            <person name="Sgro J."/>
            <person name="Delgado B."/>
            <person name="Mead K."/>
            <person name="Chinwalla A."/>
            <person name="Leonard S."/>
            <person name="Crouse K."/>
            <person name="Collura K."/>
            <person name="Kudrna D."/>
            <person name="Currie J."/>
            <person name="He R."/>
            <person name="Angelova A."/>
            <person name="Rajasekar S."/>
            <person name="Mueller T."/>
            <person name="Lomeli R."/>
            <person name="Scara G."/>
            <person name="Ko A."/>
            <person name="Delaney K."/>
            <person name="Wissotski M."/>
            <person name="Lopez G."/>
            <person name="Campos D."/>
            <person name="Braidotti M."/>
            <person name="Ashley E."/>
            <person name="Golser W."/>
            <person name="Kim H."/>
            <person name="Lee S."/>
            <person name="Lin J."/>
            <person name="Dujmic Z."/>
            <person name="Kim W."/>
            <person name="Talag J."/>
            <person name="Zuccolo A."/>
            <person name="Fan C."/>
            <person name="Sebastian A."/>
            <person name="Kramer M."/>
            <person name="Spiegel L."/>
            <person name="Nascimento L."/>
            <person name="Zutavern T."/>
            <person name="Miller B."/>
            <person name="Ambroise C."/>
            <person name="Muller S."/>
            <person name="Spooner W."/>
            <person name="Narechania A."/>
            <person name="Ren L."/>
            <person name="Wei S."/>
            <person name="Kumari S."/>
            <person name="Faga B."/>
            <person name="Levy M.J."/>
            <person name="McMahan L."/>
            <person name="Van Buren P."/>
            <person name="Vaughn M.W."/>
            <person name="Ying K."/>
            <person name="Yeh C.-T."/>
            <person name="Emrich S.J."/>
            <person name="Jia Y."/>
            <person name="Kalyanaraman A."/>
            <person name="Hsia A.-P."/>
            <person name="Barbazuk W.B."/>
            <person name="Baucom R.S."/>
            <person name="Brutnell T.P."/>
            <person name="Carpita N.C."/>
            <person name="Chaparro C."/>
            <person name="Chia J.-M."/>
            <person name="Deragon J.-M."/>
            <person name="Estill J.C."/>
            <person name="Fu Y."/>
            <person name="Jeddeloh J.A."/>
            <person name="Han Y."/>
            <person name="Lee H."/>
            <person name="Li P."/>
            <person name="Lisch D.R."/>
            <person name="Liu S."/>
            <person name="Liu Z."/>
            <person name="Nagel D.H."/>
            <person name="McCann M.C."/>
            <person name="SanMiguel P."/>
            <person name="Myers A.M."/>
            <person name="Nettleton D."/>
            <person name="Nguyen J."/>
            <person name="Penning B.W."/>
            <person name="Ponnala L."/>
            <person name="Schneider K.L."/>
            <person name="Schwartz D.C."/>
            <person name="Sharma A."/>
            <person name="Soderlund C."/>
            <person name="Springer N.M."/>
            <person name="Sun Q."/>
            <person name="Wang H."/>
            <person name="Waterman M."/>
            <person name="Westerman R."/>
            <person name="Wolfgruber T.K."/>
            <person name="Yang L."/>
            <person name="Yu Y."/>
            <person name="Zhang L."/>
            <person name="Zhou S."/>
            <person name="Zhu Q."/>
            <person name="Bennetzen J.L."/>
            <person name="Dawe R.K."/>
            <person name="Jiang J."/>
            <person name="Jiang N."/>
            <person name="Presting G.G."/>
            <person name="Wessler S.R."/>
            <person name="Aluru S."/>
            <person name="Martienssen R.A."/>
            <person name="Clifton S.W."/>
            <person name="McCombie W.R."/>
            <person name="Wing R.A."/>
            <person name="Wilson R.K."/>
        </authorList>
    </citation>
    <scope>NUCLEOTIDE SEQUENCE [LARGE SCALE GENOMIC DNA]</scope>
    <source>
        <strain>cv. B73</strain>
    </source>
</reference>
<reference key="2">
    <citation type="journal article" date="2009" name="PLoS Genet.">
        <title>Sequencing, mapping, and analysis of 27,455 maize full-length cDNAs.</title>
        <authorList>
            <person name="Soderlund C."/>
            <person name="Descour A."/>
            <person name="Kudrna D."/>
            <person name="Bomhoff M."/>
            <person name="Boyd L."/>
            <person name="Currie J."/>
            <person name="Angelova A."/>
            <person name="Collura K."/>
            <person name="Wissotski M."/>
            <person name="Ashley E."/>
            <person name="Morrow D."/>
            <person name="Fernandes J."/>
            <person name="Walbot V."/>
            <person name="Yu Y."/>
        </authorList>
    </citation>
    <scope>NUCLEOTIDE SEQUENCE [LARGE SCALE MRNA] OF 30-340</scope>
    <source>
        <strain>cv. B73</strain>
    </source>
</reference>
<reference key="3">
    <citation type="journal article" date="2013" name="Plant Physiol.">
        <title>Identification of mitochondrial coenzyme a transporters from maize and Arabidopsis.</title>
        <authorList>
            <person name="Zallot R."/>
            <person name="Agrimi G."/>
            <person name="Lerma-Ortiz C."/>
            <person name="Teresinski H.J."/>
            <person name="Frelin O."/>
            <person name="Ellens K.W."/>
            <person name="Castegna A."/>
            <person name="Russo A."/>
            <person name="de Crecy-Lagard V."/>
            <person name="Mullen R.T."/>
            <person name="Palmieri F."/>
            <person name="Hanson A.D."/>
        </authorList>
    </citation>
    <scope>FUNCTION</scope>
    <scope>SUBCELLULAR LOCATION</scope>
    <scope>TISSUE SPECIFICITY</scope>
</reference>
<keyword id="KW-0472">Membrane</keyword>
<keyword id="KW-0496">Mitochondrion</keyword>
<keyword id="KW-0999">Mitochondrion inner membrane</keyword>
<keyword id="KW-1185">Reference proteome</keyword>
<keyword id="KW-0677">Repeat</keyword>
<keyword id="KW-0812">Transmembrane</keyword>
<keyword id="KW-1133">Transmembrane helix</keyword>
<keyword id="KW-0813">Transport</keyword>
<comment type="function">
    <text evidence="3">Required for the accumulation of coenzyme A in the mitochondrial matrix.</text>
</comment>
<comment type="subcellular location">
    <subcellularLocation>
        <location evidence="3">Mitochondrion inner membrane</location>
        <topology evidence="1">Multi-pass membrane protein</topology>
    </subcellularLocation>
</comment>
<comment type="tissue specificity">
    <text evidence="3">Expressed throughout the plant.</text>
</comment>
<comment type="similarity">
    <text evidence="5">Belongs to the mitochondrial carrier (TC 2.A.29) family.</text>
</comment>
<comment type="sequence caution" evidence="5">
    <conflict type="erroneous initiation">
        <sequence resource="EMBL-CDS" id="ACF80464"/>
    </conflict>
    <text>Truncated N-terminus.</text>
</comment>
<sequence>MSSSQESTFTSASAAAQVNASALDLLPVYAKELIAGGAAGAFAKTAVAPLERVKILLQTRTEGFQSLGILQSLRKLWQYEGIRGFYKGNGASVLRIVPYAALHYMTYEQYRCWILNNSASSIGTGPVVDLLAGSAAGGTAVLCTYPLDLARTKLAYQVSNVGQTGNALGNSGQQQTYNGIKDVFKTVYKEGGARSLYRGVGPTLIGILPYAGLKFYIYEDLKSQVPDDYKDSVILKLSCGALAGLFGQTLTYPLDVVRRQMQVQSKQSQNSSDGFRIRGTFQGLLLIIRCQGWRQLFAGLSLNYVKVVPSVAIGFTTYDMMKALLGVPPRERVHASGGNK</sequence>
<evidence type="ECO:0000255" key="1"/>
<evidence type="ECO:0000255" key="2">
    <source>
        <dbReference type="PROSITE-ProRule" id="PRU00282"/>
    </source>
</evidence>
<evidence type="ECO:0000269" key="3">
    <source>
    </source>
</evidence>
<evidence type="ECO:0000303" key="4">
    <source>
    </source>
</evidence>
<evidence type="ECO:0000305" key="5"/>
<gene>
    <name evidence="4" type="primary">COAC1</name>
    <name evidence="5" type="synonym">MCF2</name>
    <name evidence="4" type="ORF">GRMZM2G420119</name>
</gene>
<organism>
    <name type="scientific">Zea mays</name>
    <name type="common">Maize</name>
    <dbReference type="NCBI Taxonomy" id="4577"/>
    <lineage>
        <taxon>Eukaryota</taxon>
        <taxon>Viridiplantae</taxon>
        <taxon>Streptophyta</taxon>
        <taxon>Embryophyta</taxon>
        <taxon>Tracheophyta</taxon>
        <taxon>Spermatophyta</taxon>
        <taxon>Magnoliopsida</taxon>
        <taxon>Liliopsida</taxon>
        <taxon>Poales</taxon>
        <taxon>Poaceae</taxon>
        <taxon>PACMAD clade</taxon>
        <taxon>Panicoideae</taxon>
        <taxon>Andropogonodae</taxon>
        <taxon>Andropogoneae</taxon>
        <taxon>Tripsacinae</taxon>
        <taxon>Zea</taxon>
    </lineage>
</organism>
<name>COAC1_MAIZE</name>
<dbReference type="EMBL" id="CM000784">
    <property type="protein sequence ID" value="AQK96255.1"/>
    <property type="molecule type" value="Genomic_DNA"/>
</dbReference>
<dbReference type="EMBL" id="CM000784">
    <property type="protein sequence ID" value="AQK96256.1"/>
    <property type="molecule type" value="Genomic_DNA"/>
</dbReference>
<dbReference type="EMBL" id="BT035459">
    <property type="protein sequence ID" value="ACF80464.1"/>
    <property type="status" value="ALT_INIT"/>
    <property type="molecule type" value="mRNA"/>
</dbReference>
<dbReference type="RefSeq" id="NP_001131864.2">
    <property type="nucleotide sequence ID" value="NM_001138392.2"/>
</dbReference>
<dbReference type="RefSeq" id="XP_008654348.1">
    <property type="nucleotide sequence ID" value="XM_008656126.1"/>
</dbReference>
<dbReference type="SMR" id="K7VYZ9"/>
<dbReference type="FunCoup" id="K7VYZ9">
    <property type="interactions" value="1649"/>
</dbReference>
<dbReference type="STRING" id="4577.K7VYZ9"/>
<dbReference type="PaxDb" id="4577-GRMZM2G420119_P01"/>
<dbReference type="EnsemblPlants" id="Zm00001eb357260_T001">
    <property type="protein sequence ID" value="Zm00001eb357260_P001"/>
    <property type="gene ID" value="Zm00001eb357260"/>
</dbReference>
<dbReference type="EnsemblPlants" id="Zm00001eb357260_T002">
    <property type="protein sequence ID" value="Zm00001eb357260_P002"/>
    <property type="gene ID" value="Zm00001eb357260"/>
</dbReference>
<dbReference type="GeneID" id="100193242"/>
<dbReference type="Gramene" id="Zm00001eb357260_T001">
    <property type="protein sequence ID" value="Zm00001eb357260_P001"/>
    <property type="gene ID" value="Zm00001eb357260"/>
</dbReference>
<dbReference type="Gramene" id="Zm00001eb357260_T002">
    <property type="protein sequence ID" value="Zm00001eb357260_P002"/>
    <property type="gene ID" value="Zm00001eb357260"/>
</dbReference>
<dbReference type="KEGG" id="zma:100193242"/>
<dbReference type="MaizeGDB" id="910015"/>
<dbReference type="eggNOG" id="KOG0752">
    <property type="taxonomic scope" value="Eukaryota"/>
</dbReference>
<dbReference type="HOGENOM" id="CLU_015166_10_1_1"/>
<dbReference type="InParanoid" id="K7VYZ9"/>
<dbReference type="OMA" id="KMAPMVA"/>
<dbReference type="OrthoDB" id="270584at2759"/>
<dbReference type="Proteomes" id="UP000007305">
    <property type="component" value="Chromosome 8"/>
</dbReference>
<dbReference type="ExpressionAtlas" id="K7VYZ9">
    <property type="expression patterns" value="baseline and differential"/>
</dbReference>
<dbReference type="GO" id="GO:0005743">
    <property type="term" value="C:mitochondrial inner membrane"/>
    <property type="evidence" value="ECO:0000314"/>
    <property type="project" value="UniProtKB"/>
</dbReference>
<dbReference type="GO" id="GO:0015228">
    <property type="term" value="F:coenzyme A transmembrane transporter activity"/>
    <property type="evidence" value="ECO:0000316"/>
    <property type="project" value="UniProtKB"/>
</dbReference>
<dbReference type="GO" id="GO:1990559">
    <property type="term" value="P:mitochondrial coenzyme A transmembrane transport"/>
    <property type="evidence" value="ECO:0000316"/>
    <property type="project" value="UniProtKB"/>
</dbReference>
<dbReference type="FunFam" id="1.50.40.10:FF:000014">
    <property type="entry name" value="mitochondrial coenzyme A transporter SLC25A42"/>
    <property type="match status" value="1"/>
</dbReference>
<dbReference type="Gene3D" id="1.50.40.10">
    <property type="entry name" value="Mitochondrial carrier domain"/>
    <property type="match status" value="1"/>
</dbReference>
<dbReference type="InterPro" id="IPR002067">
    <property type="entry name" value="Mit_carrier"/>
</dbReference>
<dbReference type="InterPro" id="IPR018108">
    <property type="entry name" value="Mitochondrial_sb/sol_carrier"/>
</dbReference>
<dbReference type="InterPro" id="IPR023395">
    <property type="entry name" value="Mt_carrier_dom_sf"/>
</dbReference>
<dbReference type="PANTHER" id="PTHR24089">
    <property type="entry name" value="SOLUTE CARRIER FAMILY 25"/>
    <property type="match status" value="1"/>
</dbReference>
<dbReference type="Pfam" id="PF00153">
    <property type="entry name" value="Mito_carr"/>
    <property type="match status" value="3"/>
</dbReference>
<dbReference type="PRINTS" id="PR00926">
    <property type="entry name" value="MITOCARRIER"/>
</dbReference>
<dbReference type="SUPFAM" id="SSF103506">
    <property type="entry name" value="Mitochondrial carrier"/>
    <property type="match status" value="1"/>
</dbReference>
<dbReference type="PROSITE" id="PS50920">
    <property type="entry name" value="SOLCAR"/>
    <property type="match status" value="3"/>
</dbReference>
<feature type="chain" id="PRO_0000440987" description="Mitochondrial carrier protein CoAc1">
    <location>
        <begin position="1"/>
        <end position="340"/>
    </location>
</feature>
<feature type="transmembrane region" description="Helical; Name=1" evidence="5">
    <location>
        <begin position="22"/>
        <end position="42"/>
    </location>
</feature>
<feature type="transmembrane region" description="Helical; Name=2" evidence="5">
    <location>
        <begin position="85"/>
        <end position="105"/>
    </location>
</feature>
<feature type="transmembrane region" description="Helical; Name=3" evidence="1">
    <location>
        <begin position="130"/>
        <end position="147"/>
    </location>
</feature>
<feature type="transmembrane region" description="Helical; Name=4" evidence="1">
    <location>
        <begin position="199"/>
        <end position="219"/>
    </location>
</feature>
<feature type="transmembrane region" description="Helical; Name=5" evidence="5">
    <location>
        <begin position="237"/>
        <end position="257"/>
    </location>
</feature>
<feature type="transmembrane region" description="Helical; Name=6" evidence="5">
    <location>
        <begin position="297"/>
        <end position="317"/>
    </location>
</feature>
<feature type="repeat" description="Solcar 1" evidence="2">
    <location>
        <begin position="27"/>
        <end position="113"/>
    </location>
</feature>
<feature type="repeat" description="Solcar 2" evidence="2">
    <location>
        <begin position="124"/>
        <end position="224"/>
    </location>
</feature>
<feature type="repeat" description="Solcar 3" evidence="2">
    <location>
        <begin position="231"/>
        <end position="324"/>
    </location>
</feature>